<proteinExistence type="evidence at protein level"/>
<gene>
    <name type="primary">RPL5</name>
    <name type="ORF">TTHERM_00736480</name>
</gene>
<evidence type="ECO:0000250" key="1">
    <source>
        <dbReference type="UniProtKB" id="P26321"/>
    </source>
</evidence>
<evidence type="ECO:0000256" key="2">
    <source>
        <dbReference type="SAM" id="MobiDB-lite"/>
    </source>
</evidence>
<evidence type="ECO:0000305" key="3"/>
<sequence>MGFVKVLKTKAYFKRFQTKYRRRREGLTDYYARKRLIIQDKDKYNTPKYRLVARATNTRIIAQIVYATLKCDRVLCAADSYELKRFGVSTGLASYAAAYATGLLLARRLLKQIGLDTVYAGQTKVDGAYFNVDEDQKEKKPFKAILDAGLVRTTTGNRVFGVLKGACDGGINIPHSESRFPGYVRASDEGESSKYKPEDHKARIFGKHIDAYMKHLKGQSNEAFQKQFSKWSKTLEAAKVDSVEKLFTKVHAEIRKNPERVKSTKKNDKPKRDHKKFYPTKLTAAQRKDRVKTKFQLALSQ</sequence>
<dbReference type="EMBL" id="GG662786">
    <property type="protein sequence ID" value="EAR91353.2"/>
    <property type="molecule type" value="Genomic_DNA"/>
</dbReference>
<dbReference type="RefSeq" id="XP_001011598.2">
    <property type="nucleotide sequence ID" value="XM_001011598.2"/>
</dbReference>
<dbReference type="PDB" id="4V8P">
    <property type="method" value="X-ray"/>
    <property type="resolution" value="3.52 A"/>
    <property type="chains" value="BM/CM/EM/GM=1-301"/>
</dbReference>
<dbReference type="PDBsum" id="4V8P"/>
<dbReference type="SMR" id="Q231U7"/>
<dbReference type="FunCoup" id="Q231U7">
    <property type="interactions" value="501"/>
</dbReference>
<dbReference type="IntAct" id="Q231U7">
    <property type="interactions" value="1"/>
</dbReference>
<dbReference type="STRING" id="312017.Q231U7"/>
<dbReference type="GeneID" id="7823307"/>
<dbReference type="KEGG" id="tet:TTHERM_00736480"/>
<dbReference type="eggNOG" id="KOG0875">
    <property type="taxonomic scope" value="Eukaryota"/>
</dbReference>
<dbReference type="InParanoid" id="Q231U7"/>
<dbReference type="OrthoDB" id="309270at2759"/>
<dbReference type="Proteomes" id="UP000009168">
    <property type="component" value="Unassembled WGS sequence"/>
</dbReference>
<dbReference type="GO" id="GO:0022625">
    <property type="term" value="C:cytosolic large ribosomal subunit"/>
    <property type="evidence" value="ECO:0007669"/>
    <property type="project" value="TreeGrafter"/>
</dbReference>
<dbReference type="GO" id="GO:0005634">
    <property type="term" value="C:nucleus"/>
    <property type="evidence" value="ECO:0007669"/>
    <property type="project" value="UniProtKB-SubCell"/>
</dbReference>
<dbReference type="GO" id="GO:0008097">
    <property type="term" value="F:5S rRNA binding"/>
    <property type="evidence" value="ECO:0007669"/>
    <property type="project" value="InterPro"/>
</dbReference>
<dbReference type="GO" id="GO:0003735">
    <property type="term" value="F:structural constituent of ribosome"/>
    <property type="evidence" value="ECO:0007669"/>
    <property type="project" value="InterPro"/>
</dbReference>
<dbReference type="GO" id="GO:0000027">
    <property type="term" value="P:ribosomal large subunit assembly"/>
    <property type="evidence" value="ECO:0007669"/>
    <property type="project" value="TreeGrafter"/>
</dbReference>
<dbReference type="GO" id="GO:0006412">
    <property type="term" value="P:translation"/>
    <property type="evidence" value="ECO:0007669"/>
    <property type="project" value="InterPro"/>
</dbReference>
<dbReference type="CDD" id="cd00432">
    <property type="entry name" value="Ribosomal_L18_L5e"/>
    <property type="match status" value="1"/>
</dbReference>
<dbReference type="FunFam" id="3.30.420.100:FF:000014">
    <property type="entry name" value="Ribosomal protein L5"/>
    <property type="match status" value="1"/>
</dbReference>
<dbReference type="Gene3D" id="3.30.420.100">
    <property type="match status" value="1"/>
</dbReference>
<dbReference type="HAMAP" id="MF_01337_A">
    <property type="entry name" value="Ribosomal_uL18_A"/>
    <property type="match status" value="1"/>
</dbReference>
<dbReference type="InterPro" id="IPR005485">
    <property type="entry name" value="Rbsml_uL18_euk"/>
</dbReference>
<dbReference type="InterPro" id="IPR025607">
    <property type="entry name" value="Ribosomal_uL18_C_euk"/>
</dbReference>
<dbReference type="PANTHER" id="PTHR23410:SF12">
    <property type="entry name" value="LARGE RIBOSOMAL SUBUNIT PROTEIN UL18"/>
    <property type="match status" value="1"/>
</dbReference>
<dbReference type="PANTHER" id="PTHR23410">
    <property type="entry name" value="RIBOSOMAL PROTEIN L5-RELATED"/>
    <property type="match status" value="1"/>
</dbReference>
<dbReference type="Pfam" id="PF14204">
    <property type="entry name" value="Ribosomal_L18_c"/>
    <property type="match status" value="1"/>
</dbReference>
<dbReference type="Pfam" id="PF17144">
    <property type="entry name" value="Ribosomal_L5e"/>
    <property type="match status" value="1"/>
</dbReference>
<dbReference type="PRINTS" id="PR00058">
    <property type="entry name" value="RIBOSOMALL5"/>
</dbReference>
<dbReference type="SUPFAM" id="SSF53137">
    <property type="entry name" value="Translational machinery components"/>
    <property type="match status" value="1"/>
</dbReference>
<organism>
    <name type="scientific">Tetrahymena thermophila (strain SB210)</name>
    <dbReference type="NCBI Taxonomy" id="312017"/>
    <lineage>
        <taxon>Eukaryota</taxon>
        <taxon>Sar</taxon>
        <taxon>Alveolata</taxon>
        <taxon>Ciliophora</taxon>
        <taxon>Intramacronucleata</taxon>
        <taxon>Oligohymenophorea</taxon>
        <taxon>Hymenostomatida</taxon>
        <taxon>Tetrahymenina</taxon>
        <taxon>Tetrahymenidae</taxon>
        <taxon>Tetrahymena</taxon>
    </lineage>
</organism>
<keyword id="KW-0002">3D-structure</keyword>
<keyword id="KW-0963">Cytoplasm</keyword>
<keyword id="KW-0539">Nucleus</keyword>
<keyword id="KW-1185">Reference proteome</keyword>
<keyword id="KW-0687">Ribonucleoprotein</keyword>
<keyword id="KW-0689">Ribosomal protein</keyword>
<keyword id="KW-0694">RNA-binding</keyword>
<keyword id="KW-0699">rRNA-binding</keyword>
<protein>
    <recommendedName>
        <fullName evidence="3">Large ribosomal subunit protein uL18</fullName>
    </recommendedName>
    <alternativeName>
        <fullName>60S ribosomal protein L5</fullName>
    </alternativeName>
</protein>
<feature type="chain" id="PRO_0000413491" description="Large ribosomal subunit protein uL18">
    <location>
        <begin position="1"/>
        <end position="301"/>
    </location>
</feature>
<feature type="region of interest" description="Disordered" evidence="2">
    <location>
        <begin position="257"/>
        <end position="283"/>
    </location>
</feature>
<feature type="compositionally biased region" description="Basic and acidic residues" evidence="2">
    <location>
        <begin position="257"/>
        <end position="271"/>
    </location>
</feature>
<accession>Q231U7</accession>
<comment type="function">
    <text evidence="1">Component of the ribosome, a large ribonucleoprotein complex responsible for the synthesis of proteins in the cell. The small ribosomal subunit (SSU) binds messenger RNAs (mRNAs) and translates the encoded message by selecting cognate aminoacyl-transfer RNA (tRNA) molecules. The large subunit (LSU) contains the ribosomal catalytic site termed the peptidyl transferase center (PTC), which catalyzes the formation of peptide bonds, thereby polymerizing the amino acids delivered by tRNAs into a polypeptide chain. The nascent polypeptides leave the ribosome through a tunnel in the LSU and interact with protein factors that function in enzymatic processing, targeting, and the membrane insertion of nascent chains at the exit of the ribosomal tunnel.</text>
</comment>
<comment type="subunit">
    <text evidence="1">Component of the large ribosomal subunit (LSU).</text>
</comment>
<comment type="subcellular location">
    <subcellularLocation>
        <location evidence="1">Cytoplasm</location>
    </subcellularLocation>
    <subcellularLocation>
        <location evidence="1">Nucleus</location>
    </subcellularLocation>
</comment>
<comment type="similarity">
    <text evidence="3">Belongs to the universal ribosomal protein uL18 family.</text>
</comment>
<name>RL5_TETTS</name>
<reference key="1">
    <citation type="journal article" date="2006" name="PLoS Biol.">
        <title>Macronuclear genome sequence of the ciliate Tetrahymena thermophila, a model eukaryote.</title>
        <authorList>
            <person name="Eisen J.A."/>
            <person name="Coyne R.S."/>
            <person name="Wu M."/>
            <person name="Wu D."/>
            <person name="Thiagarajan M."/>
            <person name="Wortman J.R."/>
            <person name="Badger J.H."/>
            <person name="Ren Q."/>
            <person name="Amedeo P."/>
            <person name="Jones K.M."/>
            <person name="Tallon L.J."/>
            <person name="Delcher A.L."/>
            <person name="Salzberg S.L."/>
            <person name="Silva J.C."/>
            <person name="Haas B.J."/>
            <person name="Majoros W.H."/>
            <person name="Farzad M."/>
            <person name="Carlton J.M."/>
            <person name="Smith R.K. Jr."/>
            <person name="Garg J."/>
            <person name="Pearlman R.E."/>
            <person name="Karrer K.M."/>
            <person name="Sun L."/>
            <person name="Manning G."/>
            <person name="Elde N.C."/>
            <person name="Turkewitz A.P."/>
            <person name="Asai D.J."/>
            <person name="Wilkes D.E."/>
            <person name="Wang Y."/>
            <person name="Cai H."/>
            <person name="Collins K."/>
            <person name="Stewart B.A."/>
            <person name="Lee S.R."/>
            <person name="Wilamowska K."/>
            <person name="Weinberg Z."/>
            <person name="Ruzzo W.L."/>
            <person name="Wloga D."/>
            <person name="Gaertig J."/>
            <person name="Frankel J."/>
            <person name="Tsao C.-C."/>
            <person name="Gorovsky M.A."/>
            <person name="Keeling P.J."/>
            <person name="Waller R.F."/>
            <person name="Patron N.J."/>
            <person name="Cherry J.M."/>
            <person name="Stover N.A."/>
            <person name="Krieger C.J."/>
            <person name="del Toro C."/>
            <person name="Ryder H.F."/>
            <person name="Williamson S.C."/>
            <person name="Barbeau R.A."/>
            <person name="Hamilton E.P."/>
            <person name="Orias E."/>
        </authorList>
    </citation>
    <scope>NUCLEOTIDE SEQUENCE [LARGE SCALE GENOMIC DNA]</scope>
    <source>
        <strain>SB210</strain>
    </source>
</reference>
<reference key="2">
    <citation type="journal article" date="2011" name="Science">
        <title>Crystal structure of the eukaryotic 60S ribosomal subunit in complex with initiation factor 6.</title>
        <authorList>
            <person name="Klinge S."/>
            <person name="Voigts-Hoffmann F."/>
            <person name="Leibundgut M."/>
            <person name="Arpagaus S."/>
            <person name="Ban N."/>
        </authorList>
    </citation>
    <scope>X-RAY CRYSTALLOGRAPHY (3.52 ANGSTROMS) OF 60S RIBOSOME</scope>
</reference>